<name>AMA1_PLAFC</name>
<gene>
    <name type="primary">AMA-1</name>
    <name type="synonym">PF83</name>
</gene>
<sequence>MRKLYCVLLLSAFEFTYMINFGRGQNYWEHPYQNSNVYHPINEHREHPKEYQYPLHQEHTYQQEDSGEDENTLQHAYPIDHEGAEPAPQEQNLFSSIEIVERSNYMGNPWTEYMAKYDIEEVHGSGIRVDLGEDAEVAGTQYRLPSGKCPVFGKGIIIENSNTTFLKPVATGNQDLKDGGFAFPPTEPLISPMTLNGMRDFYKNNEYVKNLDELTLCSRHAGNMNPDKDENSNYKYPAVYDDKDKKCHILYIAAQENNGPRYCNKDESKRNSMFCFRPAKDKSFQNYTYLSKNVVDNWEKVCPRKNLENAKFGLWVDGNCEDIPHVNEFSANDLFECNKLVFELSASDQPKQYEQHLTDYEKIKEGFKNKNASMIKSAFLPTGAFKADRYKSHGKGYNWGNYNRKTHKCEIFNVKPTCLINNSSYIATTALSHPIEVENNFPCSLYKNEIMKEIERESKRIKLNDNDDEGNKKIIAPRIFISDDKDSLKCPCDPEMVSNSTCRFFVCKCVERRAEVTSNNEVVVKEEYKDEYADIPEHKPTYDNMKIIIASSAAVAVLATILMVYLYKRKGNAEKYDKMDQPQDYGKSTSRNDEMLDPEASFWGEEKRASHTTPVLMEKPYY</sequence>
<proteinExistence type="evidence at protein level"/>
<dbReference type="EMBL" id="M58545">
    <property type="protein sequence ID" value="AAA29718.1"/>
    <property type="molecule type" value="Genomic_DNA"/>
</dbReference>
<dbReference type="PDB" id="3SRI">
    <property type="method" value="X-ray"/>
    <property type="resolution" value="1.60 A"/>
    <property type="chains" value="A=97-442"/>
</dbReference>
<dbReference type="PDBsum" id="3SRI"/>
<dbReference type="BMRB" id="P50489"/>
<dbReference type="SMR" id="P50489"/>
<dbReference type="GlyCosmos" id="P50489">
    <property type="glycosylation" value="6 sites, No reported glycans"/>
</dbReference>
<dbReference type="OMA" id="KDEMLDP"/>
<dbReference type="EvolutionaryTrace" id="P50489"/>
<dbReference type="GO" id="GO:0016020">
    <property type="term" value="C:membrane"/>
    <property type="evidence" value="ECO:0007669"/>
    <property type="project" value="UniProtKB-SubCell"/>
</dbReference>
<dbReference type="FunFam" id="4.10.1010.10:FF:000001">
    <property type="entry name" value="Apical membrane antigen 1"/>
    <property type="match status" value="1"/>
</dbReference>
<dbReference type="Gene3D" id="6.10.250.430">
    <property type="match status" value="1"/>
</dbReference>
<dbReference type="Gene3D" id="4.10.1010.10">
    <property type="entry name" value="Apical membrane antigen 1"/>
    <property type="match status" value="1"/>
</dbReference>
<dbReference type="Gene3D" id="3.50.4.10">
    <property type="entry name" value="Hepatocyte Growth Factor"/>
    <property type="match status" value="2"/>
</dbReference>
<dbReference type="InterPro" id="IPR003298">
    <property type="entry name" value="Apmem_Ag1"/>
</dbReference>
<dbReference type="InterPro" id="IPR024056">
    <property type="entry name" value="Apmem_Ag1_dom_sf"/>
</dbReference>
<dbReference type="Pfam" id="PF02430">
    <property type="entry name" value="AMA-1"/>
    <property type="match status" value="1"/>
</dbReference>
<dbReference type="PRINTS" id="PR01361">
    <property type="entry name" value="MEROZOITESA"/>
</dbReference>
<dbReference type="SMART" id="SM00815">
    <property type="entry name" value="AMA-1"/>
    <property type="match status" value="1"/>
</dbReference>
<dbReference type="SUPFAM" id="SSF82910">
    <property type="entry name" value="Apical membrane antigen 1"/>
    <property type="match status" value="1"/>
</dbReference>
<reference key="1">
    <citation type="journal article" date="1990" name="Mol. Biochem. Parasitol.">
        <title>Analysis of variation in PF83, an erythrocytic merozoite vaccine candidate antigen of Plasmodium falciparum.</title>
        <authorList>
            <person name="Thomas A.W."/>
            <person name="Waters A.P."/>
            <person name="Carr D."/>
        </authorList>
    </citation>
    <scope>NUCLEOTIDE SEQUENCE [GENOMIC DNA]</scope>
</reference>
<organism>
    <name type="scientific">Plasmodium falciparum (isolate Camp / Malaysia)</name>
    <dbReference type="NCBI Taxonomy" id="5835"/>
    <lineage>
        <taxon>Eukaryota</taxon>
        <taxon>Sar</taxon>
        <taxon>Alveolata</taxon>
        <taxon>Apicomplexa</taxon>
        <taxon>Aconoidasida</taxon>
        <taxon>Haemosporida</taxon>
        <taxon>Plasmodiidae</taxon>
        <taxon>Plasmodium</taxon>
        <taxon>Plasmodium (Laverania)</taxon>
    </lineage>
</organism>
<protein>
    <recommendedName>
        <fullName>Apical membrane antigen 1</fullName>
    </recommendedName>
    <alternativeName>
        <fullName>Merozoite surface antigen</fullName>
    </alternativeName>
</protein>
<feature type="signal peptide" evidence="2">
    <location>
        <begin position="1"/>
        <end position="24"/>
    </location>
</feature>
<feature type="chain" id="PRO_0000024610" description="Apical membrane antigen 1">
    <location>
        <begin position="25"/>
        <end position="622"/>
    </location>
</feature>
<feature type="topological domain" description="Extracellular" evidence="2">
    <location>
        <begin position="25"/>
        <end position="546"/>
    </location>
</feature>
<feature type="transmembrane region" description="Helical" evidence="2">
    <location>
        <begin position="547"/>
        <end position="567"/>
    </location>
</feature>
<feature type="topological domain" description="Cytoplasmic" evidence="2">
    <location>
        <begin position="568"/>
        <end position="622"/>
    </location>
</feature>
<feature type="region of interest" description="Disordered" evidence="3">
    <location>
        <begin position="577"/>
        <end position="607"/>
    </location>
</feature>
<feature type="glycosylation site" description="N-linked (GlcNAc...) asparagine" evidence="2">
    <location>
        <position position="162"/>
    </location>
</feature>
<feature type="glycosylation site" description="N-linked (GlcNAc...) asparagine" evidence="2">
    <location>
        <position position="286"/>
    </location>
</feature>
<feature type="glycosylation site" description="N-linked (GlcNAc...) asparagine" evidence="2">
    <location>
        <position position="371"/>
    </location>
</feature>
<feature type="glycosylation site" description="N-linked (GlcNAc...) asparagine" evidence="2">
    <location>
        <position position="421"/>
    </location>
</feature>
<feature type="glycosylation site" description="N-linked (GlcNAc...) asparagine" evidence="2">
    <location>
        <position position="422"/>
    </location>
</feature>
<feature type="glycosylation site" description="N-linked (GlcNAc...) asparagine" evidence="2">
    <location>
        <position position="499"/>
    </location>
</feature>
<feature type="disulfide bond" evidence="1">
    <location>
        <begin position="149"/>
        <end position="302"/>
    </location>
</feature>
<feature type="disulfide bond" evidence="1">
    <location>
        <begin position="217"/>
        <end position="247"/>
    </location>
</feature>
<feature type="disulfide bond" evidence="1">
    <location>
        <begin position="263"/>
        <end position="275"/>
    </location>
</feature>
<feature type="disulfide bond" evidence="1">
    <location>
        <begin position="320"/>
        <end position="418"/>
    </location>
</feature>
<feature type="disulfide bond" evidence="1">
    <location>
        <begin position="337"/>
        <end position="409"/>
    </location>
</feature>
<feature type="disulfide bond" evidence="1">
    <location>
        <begin position="443"/>
        <end position="502"/>
    </location>
</feature>
<feature type="disulfide bond" evidence="1">
    <location>
        <begin position="490"/>
        <end position="507"/>
    </location>
</feature>
<feature type="disulfide bond" evidence="1">
    <location>
        <begin position="492"/>
        <end position="509"/>
    </location>
</feature>
<feature type="helix" evidence="5">
    <location>
        <begin position="111"/>
        <end position="114"/>
    </location>
</feature>
<feature type="helix" evidence="5">
    <location>
        <begin position="115"/>
        <end position="117"/>
    </location>
</feature>
<feature type="helix" evidence="5">
    <location>
        <begin position="119"/>
        <end position="122"/>
    </location>
</feature>
<feature type="strand" evidence="5">
    <location>
        <begin position="127"/>
        <end position="129"/>
    </location>
</feature>
<feature type="strand" evidence="5">
    <location>
        <begin position="133"/>
        <end position="137"/>
    </location>
</feature>
<feature type="strand" evidence="5">
    <location>
        <begin position="140"/>
        <end position="144"/>
    </location>
</feature>
<feature type="strand" evidence="5">
    <location>
        <begin position="154"/>
        <end position="158"/>
    </location>
</feature>
<feature type="strand" evidence="5">
    <location>
        <begin position="161"/>
        <end position="164"/>
    </location>
</feature>
<feature type="strand" evidence="5">
    <location>
        <begin position="172"/>
        <end position="174"/>
    </location>
</feature>
<feature type="helix" evidence="5">
    <location>
        <begin position="176"/>
        <end position="178"/>
    </location>
</feature>
<feature type="strand" evidence="5">
    <location>
        <begin position="186"/>
        <end position="188"/>
    </location>
</feature>
<feature type="strand" evidence="5">
    <location>
        <begin position="191"/>
        <end position="194"/>
    </location>
</feature>
<feature type="helix" evidence="5">
    <location>
        <begin position="195"/>
        <end position="201"/>
    </location>
</feature>
<feature type="turn" evidence="5">
    <location>
        <begin position="202"/>
        <end position="204"/>
    </location>
</feature>
<feature type="turn" evidence="5">
    <location>
        <begin position="206"/>
        <end position="210"/>
    </location>
</feature>
<feature type="helix" evidence="5">
    <location>
        <begin position="213"/>
        <end position="222"/>
    </location>
</feature>
<feature type="strand" evidence="5">
    <location>
        <begin position="227"/>
        <end position="229"/>
    </location>
</feature>
<feature type="strand" evidence="5">
    <location>
        <begin position="238"/>
        <end position="241"/>
    </location>
</feature>
<feature type="turn" evidence="5">
    <location>
        <begin position="242"/>
        <end position="245"/>
    </location>
</feature>
<feature type="strand" evidence="5">
    <location>
        <begin position="246"/>
        <end position="251"/>
    </location>
</feature>
<feature type="strand" evidence="5">
    <location>
        <begin position="276"/>
        <end position="280"/>
    </location>
</feature>
<feature type="helix" evidence="5">
    <location>
        <begin position="282"/>
        <end position="284"/>
    </location>
</feature>
<feature type="strand" evidence="5">
    <location>
        <begin position="287"/>
        <end position="290"/>
    </location>
</feature>
<feature type="helix" evidence="5">
    <location>
        <begin position="298"/>
        <end position="301"/>
    </location>
</feature>
<feature type="strand" evidence="5">
    <location>
        <begin position="305"/>
        <end position="316"/>
    </location>
</feature>
<feature type="strand" evidence="5">
    <location>
        <begin position="319"/>
        <end position="322"/>
    </location>
</feature>
<feature type="strand" evidence="5">
    <location>
        <begin position="327"/>
        <end position="330"/>
    </location>
</feature>
<feature type="helix" evidence="5">
    <location>
        <begin position="334"/>
        <end position="344"/>
    </location>
</feature>
<feature type="strand" evidence="5">
    <location>
        <begin position="399"/>
        <end position="403"/>
    </location>
</feature>
<feature type="turn" evidence="5">
    <location>
        <begin position="404"/>
        <end position="407"/>
    </location>
</feature>
<feature type="strand" evidence="5">
    <location>
        <begin position="408"/>
        <end position="414"/>
    </location>
</feature>
<feature type="strand" evidence="5">
    <location>
        <begin position="418"/>
        <end position="429"/>
    </location>
</feature>
<keyword id="KW-0002">3D-structure</keyword>
<keyword id="KW-1015">Disulfide bond</keyword>
<keyword id="KW-0325">Glycoprotein</keyword>
<keyword id="KW-0461">Malaria</keyword>
<keyword id="KW-0472">Membrane</keyword>
<keyword id="KW-0732">Signal</keyword>
<keyword id="KW-0812">Transmembrane</keyword>
<keyword id="KW-1133">Transmembrane helix</keyword>
<accession>P50489</accession>
<comment type="function">
    <text>Involved in parasite invasion of erythrocytes.</text>
</comment>
<comment type="subcellular location">
    <subcellularLocation>
        <location>Membrane</location>
        <topology>Single-pass type I membrane protein</topology>
    </subcellularLocation>
</comment>
<comment type="similarity">
    <text evidence="4">Belongs to the apicomplexan parasites AMA1 family.</text>
</comment>
<evidence type="ECO:0000250" key="1"/>
<evidence type="ECO:0000255" key="2"/>
<evidence type="ECO:0000256" key="3">
    <source>
        <dbReference type="SAM" id="MobiDB-lite"/>
    </source>
</evidence>
<evidence type="ECO:0000305" key="4"/>
<evidence type="ECO:0007829" key="5">
    <source>
        <dbReference type="PDB" id="3SRI"/>
    </source>
</evidence>